<comment type="function">
    <text evidence="1">Catalyzes the conversion of glucosamine-6-phosphate to glucosamine-1-phosphate.</text>
</comment>
<comment type="catalytic activity">
    <reaction evidence="1">
        <text>alpha-D-glucosamine 1-phosphate = D-glucosamine 6-phosphate</text>
        <dbReference type="Rhea" id="RHEA:23424"/>
        <dbReference type="ChEBI" id="CHEBI:58516"/>
        <dbReference type="ChEBI" id="CHEBI:58725"/>
        <dbReference type="EC" id="5.4.2.10"/>
    </reaction>
</comment>
<comment type="cofactor">
    <cofactor evidence="1">
        <name>Mg(2+)</name>
        <dbReference type="ChEBI" id="CHEBI:18420"/>
    </cofactor>
    <text evidence="1">Binds 1 Mg(2+) ion per subunit.</text>
</comment>
<comment type="PTM">
    <text evidence="1">Activated by phosphorylation.</text>
</comment>
<comment type="similarity">
    <text evidence="1">Belongs to the phosphohexose mutase family.</text>
</comment>
<gene>
    <name evidence="1" type="primary">glmM</name>
    <name type="ordered locus">BH0267</name>
</gene>
<sequence length="447" mass="48120">MGKYFGTDGVRGVANTELTPELAFKLGRIGGYVLTKDKENPKVLIGRDTRISGEMLEGALVAGLLSIGVEVMRLGVISTPGVAFLTKAVSASAGVMISASHNPVADNGIKFFGPDGFKLLDEQEKEIETLLDQEDALPRPTGADLGQANDYFEGAQKYLQFLKQTVDEDFTGIHIALDCANGAASSLAPHLFADLEADISTMGTSPNGKNINDGVGSTHPEALAAFVNAKNADIGLAFDGDADRLIAVDEKGNIVDGDKILYICAKYMKEKGLLKQQTLVTTVMSNLGLYKALEALQIDTKQTAVGDRYVMEEMRKGGYNLGGEQSGHIIFLDHITTGDGMLSALQLVNIMKQTGKKLSELAEEWETFPQTLVNIRVTDKHAVTDNEKVPAVIKEVEQEMNGEGRVLVRPSGTEPLVRIMVEAKTEELCDAFVNKIADVVKAELGQE</sequence>
<evidence type="ECO:0000255" key="1">
    <source>
        <dbReference type="HAMAP-Rule" id="MF_01554"/>
    </source>
</evidence>
<organism>
    <name type="scientific">Halalkalibacterium halodurans (strain ATCC BAA-125 / DSM 18197 / FERM 7344 / JCM 9153 / C-125)</name>
    <name type="common">Bacillus halodurans</name>
    <dbReference type="NCBI Taxonomy" id="272558"/>
    <lineage>
        <taxon>Bacteria</taxon>
        <taxon>Bacillati</taxon>
        <taxon>Bacillota</taxon>
        <taxon>Bacilli</taxon>
        <taxon>Bacillales</taxon>
        <taxon>Bacillaceae</taxon>
        <taxon>Halalkalibacterium (ex Joshi et al. 2022)</taxon>
    </lineage>
</organism>
<proteinExistence type="inferred from homology"/>
<protein>
    <recommendedName>
        <fullName evidence="1">Phosphoglucosamine mutase</fullName>
        <ecNumber evidence="1">5.4.2.10</ecNumber>
    </recommendedName>
</protein>
<dbReference type="EC" id="5.4.2.10" evidence="1"/>
<dbReference type="EMBL" id="BA000004">
    <property type="protein sequence ID" value="BAB03986.1"/>
    <property type="molecule type" value="Genomic_DNA"/>
</dbReference>
<dbReference type="PIR" id="C83683">
    <property type="entry name" value="C83683"/>
</dbReference>
<dbReference type="RefSeq" id="WP_010896449.1">
    <property type="nucleotide sequence ID" value="NC_002570.2"/>
</dbReference>
<dbReference type="SMR" id="Q9KG46"/>
<dbReference type="STRING" id="272558.gene:10726120"/>
<dbReference type="KEGG" id="bha:BH0267"/>
<dbReference type="eggNOG" id="COG1109">
    <property type="taxonomic scope" value="Bacteria"/>
</dbReference>
<dbReference type="HOGENOM" id="CLU_016950_7_0_9"/>
<dbReference type="OrthoDB" id="9806956at2"/>
<dbReference type="Proteomes" id="UP000001258">
    <property type="component" value="Chromosome"/>
</dbReference>
<dbReference type="GO" id="GO:0005829">
    <property type="term" value="C:cytosol"/>
    <property type="evidence" value="ECO:0007669"/>
    <property type="project" value="TreeGrafter"/>
</dbReference>
<dbReference type="GO" id="GO:0000287">
    <property type="term" value="F:magnesium ion binding"/>
    <property type="evidence" value="ECO:0007669"/>
    <property type="project" value="UniProtKB-UniRule"/>
</dbReference>
<dbReference type="GO" id="GO:0008966">
    <property type="term" value="F:phosphoglucosamine mutase activity"/>
    <property type="evidence" value="ECO:0007669"/>
    <property type="project" value="UniProtKB-UniRule"/>
</dbReference>
<dbReference type="GO" id="GO:0004615">
    <property type="term" value="F:phosphomannomutase activity"/>
    <property type="evidence" value="ECO:0007669"/>
    <property type="project" value="TreeGrafter"/>
</dbReference>
<dbReference type="GO" id="GO:0005975">
    <property type="term" value="P:carbohydrate metabolic process"/>
    <property type="evidence" value="ECO:0007669"/>
    <property type="project" value="InterPro"/>
</dbReference>
<dbReference type="GO" id="GO:0009252">
    <property type="term" value="P:peptidoglycan biosynthetic process"/>
    <property type="evidence" value="ECO:0007669"/>
    <property type="project" value="TreeGrafter"/>
</dbReference>
<dbReference type="GO" id="GO:0006048">
    <property type="term" value="P:UDP-N-acetylglucosamine biosynthetic process"/>
    <property type="evidence" value="ECO:0007669"/>
    <property type="project" value="TreeGrafter"/>
</dbReference>
<dbReference type="CDD" id="cd05802">
    <property type="entry name" value="GlmM"/>
    <property type="match status" value="1"/>
</dbReference>
<dbReference type="FunFam" id="3.30.310.50:FF:000001">
    <property type="entry name" value="Phosphoglucosamine mutase"/>
    <property type="match status" value="1"/>
</dbReference>
<dbReference type="FunFam" id="3.40.120.10:FF:000001">
    <property type="entry name" value="Phosphoglucosamine mutase"/>
    <property type="match status" value="1"/>
</dbReference>
<dbReference type="FunFam" id="3.40.120.10:FF:000002">
    <property type="entry name" value="Phosphoglucosamine mutase"/>
    <property type="match status" value="1"/>
</dbReference>
<dbReference type="Gene3D" id="3.40.120.10">
    <property type="entry name" value="Alpha-D-Glucose-1,6-Bisphosphate, subunit A, domain 3"/>
    <property type="match status" value="3"/>
</dbReference>
<dbReference type="Gene3D" id="3.30.310.50">
    <property type="entry name" value="Alpha-D-phosphohexomutase, C-terminal domain"/>
    <property type="match status" value="1"/>
</dbReference>
<dbReference type="HAMAP" id="MF_01554_B">
    <property type="entry name" value="GlmM_B"/>
    <property type="match status" value="1"/>
</dbReference>
<dbReference type="InterPro" id="IPR005844">
    <property type="entry name" value="A-D-PHexomutase_a/b/a-I"/>
</dbReference>
<dbReference type="InterPro" id="IPR016055">
    <property type="entry name" value="A-D-PHexomutase_a/b/a-I/II/III"/>
</dbReference>
<dbReference type="InterPro" id="IPR005845">
    <property type="entry name" value="A-D-PHexomutase_a/b/a-II"/>
</dbReference>
<dbReference type="InterPro" id="IPR005846">
    <property type="entry name" value="A-D-PHexomutase_a/b/a-III"/>
</dbReference>
<dbReference type="InterPro" id="IPR005843">
    <property type="entry name" value="A-D-PHexomutase_C"/>
</dbReference>
<dbReference type="InterPro" id="IPR036900">
    <property type="entry name" value="A-D-PHexomutase_C_sf"/>
</dbReference>
<dbReference type="InterPro" id="IPR016066">
    <property type="entry name" value="A-D-PHexomutase_CS"/>
</dbReference>
<dbReference type="InterPro" id="IPR005841">
    <property type="entry name" value="Alpha-D-phosphohexomutase_SF"/>
</dbReference>
<dbReference type="InterPro" id="IPR006352">
    <property type="entry name" value="GlmM_bact"/>
</dbReference>
<dbReference type="InterPro" id="IPR050060">
    <property type="entry name" value="Phosphoglucosamine_mutase"/>
</dbReference>
<dbReference type="NCBIfam" id="TIGR01455">
    <property type="entry name" value="glmM"/>
    <property type="match status" value="1"/>
</dbReference>
<dbReference type="NCBIfam" id="NF008139">
    <property type="entry name" value="PRK10887.1"/>
    <property type="match status" value="1"/>
</dbReference>
<dbReference type="PANTHER" id="PTHR42946:SF1">
    <property type="entry name" value="PHOSPHOGLUCOMUTASE (ALPHA-D-GLUCOSE-1,6-BISPHOSPHATE-DEPENDENT)"/>
    <property type="match status" value="1"/>
</dbReference>
<dbReference type="PANTHER" id="PTHR42946">
    <property type="entry name" value="PHOSPHOHEXOSE MUTASE"/>
    <property type="match status" value="1"/>
</dbReference>
<dbReference type="Pfam" id="PF02878">
    <property type="entry name" value="PGM_PMM_I"/>
    <property type="match status" value="1"/>
</dbReference>
<dbReference type="Pfam" id="PF02879">
    <property type="entry name" value="PGM_PMM_II"/>
    <property type="match status" value="1"/>
</dbReference>
<dbReference type="Pfam" id="PF02880">
    <property type="entry name" value="PGM_PMM_III"/>
    <property type="match status" value="1"/>
</dbReference>
<dbReference type="Pfam" id="PF00408">
    <property type="entry name" value="PGM_PMM_IV"/>
    <property type="match status" value="1"/>
</dbReference>
<dbReference type="PRINTS" id="PR00509">
    <property type="entry name" value="PGMPMM"/>
</dbReference>
<dbReference type="SUPFAM" id="SSF55957">
    <property type="entry name" value="Phosphoglucomutase, C-terminal domain"/>
    <property type="match status" value="1"/>
</dbReference>
<dbReference type="SUPFAM" id="SSF53738">
    <property type="entry name" value="Phosphoglucomutase, first 3 domains"/>
    <property type="match status" value="3"/>
</dbReference>
<dbReference type="PROSITE" id="PS00710">
    <property type="entry name" value="PGM_PMM"/>
    <property type="match status" value="1"/>
</dbReference>
<keyword id="KW-0413">Isomerase</keyword>
<keyword id="KW-0460">Magnesium</keyword>
<keyword id="KW-0479">Metal-binding</keyword>
<keyword id="KW-0597">Phosphoprotein</keyword>
<keyword id="KW-1185">Reference proteome</keyword>
<reference key="1">
    <citation type="journal article" date="2000" name="Nucleic Acids Res.">
        <title>Complete genome sequence of the alkaliphilic bacterium Bacillus halodurans and genomic sequence comparison with Bacillus subtilis.</title>
        <authorList>
            <person name="Takami H."/>
            <person name="Nakasone K."/>
            <person name="Takaki Y."/>
            <person name="Maeno G."/>
            <person name="Sasaki R."/>
            <person name="Masui N."/>
            <person name="Fuji F."/>
            <person name="Hirama C."/>
            <person name="Nakamura Y."/>
            <person name="Ogasawara N."/>
            <person name="Kuhara S."/>
            <person name="Horikoshi K."/>
        </authorList>
    </citation>
    <scope>NUCLEOTIDE SEQUENCE [LARGE SCALE GENOMIC DNA]</scope>
    <source>
        <strain>ATCC BAA-125 / DSM 18197 / FERM 7344 / JCM 9153 / C-125</strain>
    </source>
</reference>
<accession>Q9KG46</accession>
<feature type="chain" id="PRO_0000147844" description="Phosphoglucosamine mutase">
    <location>
        <begin position="1"/>
        <end position="447"/>
    </location>
</feature>
<feature type="active site" description="Phosphoserine intermediate" evidence="1">
    <location>
        <position position="100"/>
    </location>
</feature>
<feature type="binding site" description="via phosphate group" evidence="1">
    <location>
        <position position="100"/>
    </location>
    <ligand>
        <name>Mg(2+)</name>
        <dbReference type="ChEBI" id="CHEBI:18420"/>
    </ligand>
</feature>
<feature type="binding site" evidence="1">
    <location>
        <position position="239"/>
    </location>
    <ligand>
        <name>Mg(2+)</name>
        <dbReference type="ChEBI" id="CHEBI:18420"/>
    </ligand>
</feature>
<feature type="binding site" evidence="1">
    <location>
        <position position="241"/>
    </location>
    <ligand>
        <name>Mg(2+)</name>
        <dbReference type="ChEBI" id="CHEBI:18420"/>
    </ligand>
</feature>
<feature type="binding site" evidence="1">
    <location>
        <position position="243"/>
    </location>
    <ligand>
        <name>Mg(2+)</name>
        <dbReference type="ChEBI" id="CHEBI:18420"/>
    </ligand>
</feature>
<feature type="modified residue" description="Phosphoserine" evidence="1">
    <location>
        <position position="100"/>
    </location>
</feature>
<name>GLMM_HALH5</name>